<keyword id="KW-0002">3D-structure</keyword>
<keyword id="KW-0168">Coated pit</keyword>
<keyword id="KW-0963">Cytoplasm</keyword>
<keyword id="KW-0968">Cytoplasmic vesicle</keyword>
<keyword id="KW-0903">Direct protein sequencing</keyword>
<keyword id="KW-0333">Golgi apparatus</keyword>
<keyword id="KW-0472">Membrane</keyword>
<keyword id="KW-0653">Protein transport</keyword>
<keyword id="KW-1185">Reference proteome</keyword>
<keyword id="KW-0813">Transport</keyword>
<evidence type="ECO:0000250" key="1">
    <source>
        <dbReference type="UniProtKB" id="O43747"/>
    </source>
</evidence>
<evidence type="ECO:0000255" key="2">
    <source>
        <dbReference type="PROSITE-ProRule" id="PRU00093"/>
    </source>
</evidence>
<evidence type="ECO:0000256" key="3">
    <source>
        <dbReference type="SAM" id="MobiDB-lite"/>
    </source>
</evidence>
<evidence type="ECO:0000269" key="4">
    <source>
    </source>
</evidence>
<evidence type="ECO:0000269" key="5">
    <source>
    </source>
</evidence>
<evidence type="ECO:0000305" key="6"/>
<evidence type="ECO:0007829" key="7">
    <source>
        <dbReference type="PDB" id="3ZY7"/>
    </source>
</evidence>
<evidence type="ECO:0007829" key="8">
    <source>
        <dbReference type="PDB" id="4P6Z"/>
    </source>
</evidence>
<evidence type="ECO:0007829" key="9">
    <source>
        <dbReference type="PDB" id="7R4H"/>
    </source>
</evidence>
<protein>
    <recommendedName>
        <fullName>AP-1 complex subunit gamma-1</fullName>
    </recommendedName>
    <alternativeName>
        <fullName>Adaptor protein complex AP-1 subunit gamma-1</fullName>
    </alternativeName>
    <alternativeName>
        <fullName>Adaptor-related protein complex 1 subunit gamma-1</fullName>
    </alternativeName>
    <alternativeName>
        <fullName>Clathrin assembly protein complex 1 gamma-1 large chain</fullName>
    </alternativeName>
    <alternativeName>
        <fullName>Gamma-adaptin</fullName>
    </alternativeName>
    <alternativeName>
        <fullName>Gamma1-adaptin</fullName>
    </alternativeName>
    <alternativeName>
        <fullName>Golgi adaptor HA1/AP1 adaptin subunit gamma-1</fullName>
    </alternativeName>
</protein>
<comment type="function">
    <text evidence="1">Subunit of clathrin-associated adaptor protein complex 1 that plays a role in protein sorting in the late-Golgi/trans-Golgi network (TGN) and/or endosomes. The AP complexes mediate both the recruitment of clathrin to membranes and the recognition of sorting signals within the cytosolic tails of transmembrane cargo molecules. In association with AFTPH/aftiphilin in the aftiphilin/p200/gamma-synergin complex, involved in the trafficking of transferrin from early to recycling endosomes, and the membrane trafficking of furin and the lysosomal enzyme cathepsin D between the trans-Golgi network (TGN) and endosomes (By similarity).</text>
</comment>
<comment type="subunit">
    <text evidence="1 4">Adaptor protein complex 1 (AP-1) is a heterotetramer composed of two large adaptins (gamma-type subunit AP1G1 and beta-type subunit AP1B1), a medium adaptin (mu-type subunit AP1M1 or AP1M2) and a small adaptin (sigma-type subunit AP1S1 or AP1S2 or AP1S3) (By similarity). Interacts (via GAE domain) with RABEP1 (By similarity). Interacts with EPS15 (PubMed:12176391). Interacts with SYNRG/gamma-synergin (PubMed:12176391). Interacts (via GAE domain) with AP1AR (via coiled-coil domain) (By similarity). Interacts with CLN3 (via dileucine motif); this interaction facilitates lysosomal targeting (By similarity). Interacts (via GAE domain) with AFTPH/aftiphilin; the interaction is required to recruit AFTPH/aftiphilin to the perinuclear region of the cell (By similarity).</text>
</comment>
<comment type="interaction">
    <interactant intactId="EBI-1040262">
        <id>P22892</id>
    </interactant>
    <interactant intactId="EBI-1040251">
        <id>P35585</id>
        <label>Ap1m1</label>
    </interactant>
    <organismsDiffer>false</organismsDiffer>
    <experiments>6</experiments>
</comment>
<comment type="interaction">
    <interactant intactId="EBI-1040262">
        <id>P22892</id>
    </interactant>
    <interactant intactId="EBI-1171113">
        <id>Q14677</id>
        <label>CLINT1</label>
    </interactant>
    <organismsDiffer>true</organismsDiffer>
    <experiments>10</experiments>
</comment>
<comment type="subcellular location">
    <subcellularLocation>
        <location evidence="1">Golgi apparatus</location>
    </subcellularLocation>
    <subcellularLocation>
        <location evidence="1">Cytoplasmic vesicle</location>
        <location evidence="1">Clathrin-coated vesicle membrane</location>
        <topology evidence="1">Peripheral membrane protein</topology>
        <orientation evidence="1">Cytoplasmic side</orientation>
    </subcellularLocation>
    <subcellularLocation>
        <location evidence="1">Cytoplasm</location>
    </subcellularLocation>
    <subcellularLocation>
        <location evidence="1">Cytoplasm</location>
        <location evidence="1">Perinuclear region</location>
    </subcellularLocation>
    <subcellularLocation>
        <location evidence="1">Cytoplasmic vesicle</location>
        <location evidence="1">Clathrin-coated vesicle</location>
    </subcellularLocation>
    <subcellularLocation>
        <location evidence="1">Membrane</location>
        <location evidence="1">Clathrin-coated pit</location>
    </subcellularLocation>
    <text evidence="1">Component of the coat surrounding the cytoplasmic face of coated vesicles located at the Golgi complex (By similarity). Co-localizes with AFTPH/aftiphilin in the cytoplasm (By similarity).</text>
</comment>
<comment type="tissue specificity">
    <text>Widely expressed.</text>
</comment>
<comment type="similarity">
    <text evidence="6">Belongs to the adaptor complexes large subunit family.</text>
</comment>
<reference key="1">
    <citation type="journal article" date="1990" name="J. Cell Biol.">
        <title>Cloning and expression of gamma-adaptin, a component of clathrin-coated vesicles associated with the Golgi apparatus.</title>
        <authorList>
            <person name="Robinson M.S."/>
        </authorList>
    </citation>
    <scope>NUCLEOTIDE SEQUENCE [MRNA]</scope>
    <scope>PROTEIN SEQUENCE OF 2-25</scope>
    <source>
        <tissue>Brain</tissue>
    </source>
</reference>
<reference key="2">
    <citation type="journal article" date="2010" name="Cell">
        <title>A tissue-specific atlas of mouse protein phosphorylation and expression.</title>
        <authorList>
            <person name="Huttlin E.L."/>
            <person name="Jedrychowski M.P."/>
            <person name="Elias J.E."/>
            <person name="Goswami T."/>
            <person name="Rad R."/>
            <person name="Beausoleil S.A."/>
            <person name="Villen J."/>
            <person name="Haas W."/>
            <person name="Sowa M.E."/>
            <person name="Gygi S.P."/>
        </authorList>
    </citation>
    <scope>IDENTIFICATION BY MASS SPECTROMETRY [LARGE SCALE ANALYSIS]</scope>
    <source>
        <tissue>Brain</tissue>
        <tissue>Brown adipose tissue</tissue>
        <tissue>Heart</tissue>
        <tissue>Kidney</tissue>
        <tissue>Liver</tissue>
        <tissue>Lung</tissue>
        <tissue>Pancreas</tissue>
        <tissue>Spleen</tissue>
        <tissue>Testis</tissue>
    </source>
</reference>
<reference key="3">
    <citation type="journal article" date="2002" name="Structure">
        <title>Gamma-adaptin appendage domain: structure and binding site for Eps15 and gamma-synergin.</title>
        <authorList>
            <person name="Kent H.M."/>
            <person name="McMahon H.T."/>
            <person name="Evans P.R."/>
            <person name="Benmerah A."/>
            <person name="Owen D.J."/>
        </authorList>
    </citation>
    <scope>X-RAY CRYSTALLOGRAPHY (1.81 ANGSTROMS) OF 704-822</scope>
    <scope>MUTAGENESIS OF ALA-753; LEU-762 AND PRO-765</scope>
    <scope>INTERACTION WITH EPS15 AND SYNRG</scope>
</reference>
<reference key="4">
    <citation type="journal article" date="2004" name="Proc. Natl. Acad. Sci. U.S.A.">
        <title>Crystal structure of the clathrin adaptor protein 1 core.</title>
        <authorList>
            <person name="Heldwein E.E."/>
            <person name="Macia E."/>
            <person name="Wang J."/>
            <person name="Yin H.L."/>
            <person name="Kirchhausen T."/>
            <person name="Harrison S.C."/>
        </authorList>
    </citation>
    <scope>X-RAY CRYSTALLOGRAPHY (4.0 ANGSTROMS) OF 1-613</scope>
    <scope>SUBUNIT</scope>
</reference>
<organism>
    <name type="scientific">Mus musculus</name>
    <name type="common">Mouse</name>
    <dbReference type="NCBI Taxonomy" id="10090"/>
    <lineage>
        <taxon>Eukaryota</taxon>
        <taxon>Metazoa</taxon>
        <taxon>Chordata</taxon>
        <taxon>Craniata</taxon>
        <taxon>Vertebrata</taxon>
        <taxon>Euteleostomi</taxon>
        <taxon>Mammalia</taxon>
        <taxon>Eutheria</taxon>
        <taxon>Euarchontoglires</taxon>
        <taxon>Glires</taxon>
        <taxon>Rodentia</taxon>
        <taxon>Myomorpha</taxon>
        <taxon>Muroidea</taxon>
        <taxon>Muridae</taxon>
        <taxon>Murinae</taxon>
        <taxon>Mus</taxon>
        <taxon>Mus</taxon>
    </lineage>
</organism>
<gene>
    <name type="primary">Ap1g1</name>
    <name type="synonym">Adtg</name>
    <name type="synonym">Clapg1</name>
</gene>
<dbReference type="EMBL" id="X54424">
    <property type="protein sequence ID" value="CAA38296.1"/>
    <property type="molecule type" value="mRNA"/>
</dbReference>
<dbReference type="CCDS" id="CCDS80929.1"/>
<dbReference type="PIR" id="A36680">
    <property type="entry name" value="A36680"/>
</dbReference>
<dbReference type="RefSeq" id="NP_001288140.1">
    <property type="nucleotide sequence ID" value="NM_001301211.1"/>
</dbReference>
<dbReference type="PDB" id="1GYU">
    <property type="method" value="X-ray"/>
    <property type="resolution" value="1.81 A"/>
    <property type="chains" value="A=704-822"/>
</dbReference>
<dbReference type="PDB" id="1GYV">
    <property type="method" value="X-ray"/>
    <property type="resolution" value="1.71 A"/>
    <property type="chains" value="A=704-822"/>
</dbReference>
<dbReference type="PDB" id="1GYW">
    <property type="method" value="X-ray"/>
    <property type="resolution" value="2.40 A"/>
    <property type="chains" value="A/B=695-822"/>
</dbReference>
<dbReference type="PDB" id="1W63">
    <property type="method" value="X-ray"/>
    <property type="resolution" value="4.00 A"/>
    <property type="chains" value="A/C/E/G/I/K=1-613"/>
</dbReference>
<dbReference type="PDB" id="2A7B">
    <property type="method" value="X-ray"/>
    <property type="resolution" value="1.65 A"/>
    <property type="chains" value="A=704-822"/>
</dbReference>
<dbReference type="PDB" id="3ZY7">
    <property type="method" value="X-ray"/>
    <property type="resolution" value="1.09 A"/>
    <property type="chains" value="A/B=704-822"/>
</dbReference>
<dbReference type="PDB" id="4HMY">
    <property type="method" value="X-ray"/>
    <property type="resolution" value="7.00 A"/>
    <property type="chains" value="A=1-595"/>
</dbReference>
<dbReference type="PDB" id="4P6Z">
    <property type="method" value="X-ray"/>
    <property type="resolution" value="3.00 A"/>
    <property type="chains" value="G=1-613"/>
</dbReference>
<dbReference type="PDB" id="6CM9">
    <property type="method" value="EM"/>
    <property type="resolution" value="3.73 A"/>
    <property type="chains" value="G=1-595"/>
</dbReference>
<dbReference type="PDB" id="6CRI">
    <property type="method" value="EM"/>
    <property type="resolution" value="6.80 A"/>
    <property type="chains" value="G/Q/R=4-588"/>
</dbReference>
<dbReference type="PDB" id="6D83">
    <property type="method" value="EM"/>
    <property type="resolution" value="4.27 A"/>
    <property type="chains" value="G=1-595"/>
</dbReference>
<dbReference type="PDB" id="6D84">
    <property type="method" value="EM"/>
    <property type="resolution" value="6.72 A"/>
    <property type="chains" value="G/K=1-595"/>
</dbReference>
<dbReference type="PDB" id="6DFF">
    <property type="method" value="EM"/>
    <property type="resolution" value="3.90 A"/>
    <property type="chains" value="G=1-595"/>
</dbReference>
<dbReference type="PDB" id="7R4H">
    <property type="method" value="EM"/>
    <property type="resolution" value="2.34 A"/>
    <property type="chains" value="G=1-595"/>
</dbReference>
<dbReference type="PDB" id="7UX3">
    <property type="method" value="EM"/>
    <property type="resolution" value="9.60 A"/>
    <property type="chains" value="G=2-595"/>
</dbReference>
<dbReference type="PDB" id="8D4C">
    <property type="method" value="EM"/>
    <property type="resolution" value="9.30 A"/>
    <property type="chains" value="E/G=2-595"/>
</dbReference>
<dbReference type="PDB" id="8D4D">
    <property type="method" value="EM"/>
    <property type="resolution" value="9.60 A"/>
    <property type="chains" value="E/G=1-595"/>
</dbReference>
<dbReference type="PDB" id="8D4E">
    <property type="method" value="EM"/>
    <property type="resolution" value="9.20 A"/>
    <property type="chains" value="G=1-595"/>
</dbReference>
<dbReference type="PDB" id="8D4F">
    <property type="method" value="EM"/>
    <property type="resolution" value="9.80 A"/>
    <property type="chains" value="E/G=1-595"/>
</dbReference>
<dbReference type="PDB" id="8D4G">
    <property type="method" value="EM"/>
    <property type="resolution" value="11.60 A"/>
    <property type="chains" value="E/G=1-595"/>
</dbReference>
<dbReference type="PDB" id="8D9R">
    <property type="method" value="EM"/>
    <property type="resolution" value="20.00 A"/>
    <property type="chains" value="G/R/T/U/V/W=1-595"/>
</dbReference>
<dbReference type="PDB" id="8D9S">
    <property type="method" value="EM"/>
    <property type="resolution" value="20.00 A"/>
    <property type="chains" value="G/R/T/U/V/W=1-595"/>
</dbReference>
<dbReference type="PDB" id="8D9T">
    <property type="method" value="EM"/>
    <property type="resolution" value="20.00 A"/>
    <property type="chains" value="G/R/T/U/V/W=1-595"/>
</dbReference>
<dbReference type="PDB" id="8D9U">
    <property type="method" value="EM"/>
    <property type="resolution" value="20.00 A"/>
    <property type="chains" value="G/R/T/U/V/W=1-595"/>
</dbReference>
<dbReference type="PDB" id="8D9V">
    <property type="method" value="EM"/>
    <property type="resolution" value="9.40 A"/>
    <property type="chains" value="E/G=1-595"/>
</dbReference>
<dbReference type="PDB" id="8D9W">
    <property type="method" value="EM"/>
    <property type="resolution" value="9.30 A"/>
    <property type="chains" value="K/O=1-595"/>
</dbReference>
<dbReference type="PDBsum" id="1GYU"/>
<dbReference type="PDBsum" id="1GYV"/>
<dbReference type="PDBsum" id="1GYW"/>
<dbReference type="PDBsum" id="1W63"/>
<dbReference type="PDBsum" id="2A7B"/>
<dbReference type="PDBsum" id="3ZY7"/>
<dbReference type="PDBsum" id="4HMY"/>
<dbReference type="PDBsum" id="4P6Z"/>
<dbReference type="PDBsum" id="6CM9"/>
<dbReference type="PDBsum" id="6CRI"/>
<dbReference type="PDBsum" id="6D83"/>
<dbReference type="PDBsum" id="6D84"/>
<dbReference type="PDBsum" id="6DFF"/>
<dbReference type="PDBsum" id="7R4H"/>
<dbReference type="PDBsum" id="7UX3"/>
<dbReference type="PDBsum" id="8D4C"/>
<dbReference type="PDBsum" id="8D4D"/>
<dbReference type="PDBsum" id="8D4E"/>
<dbReference type="PDBsum" id="8D4F"/>
<dbReference type="PDBsum" id="8D4G"/>
<dbReference type="PDBsum" id="8D9R"/>
<dbReference type="PDBsum" id="8D9S"/>
<dbReference type="PDBsum" id="8D9T"/>
<dbReference type="PDBsum" id="8D9U"/>
<dbReference type="PDBsum" id="8D9V"/>
<dbReference type="PDBsum" id="8D9W"/>
<dbReference type="BMRB" id="P22892"/>
<dbReference type="EMDB" id="EMD-14312"/>
<dbReference type="EMDB" id="EMD-26853"/>
<dbReference type="EMDB" id="EMD-27181"/>
<dbReference type="EMDB" id="EMD-27182"/>
<dbReference type="EMDB" id="EMD-27183"/>
<dbReference type="EMDB" id="EMD-27184"/>
<dbReference type="EMDB" id="EMD-27185"/>
<dbReference type="EMDB" id="EMD-7563"/>
<dbReference type="SMR" id="P22892"/>
<dbReference type="BioGRID" id="198123">
    <property type="interactions" value="27"/>
</dbReference>
<dbReference type="ComplexPortal" id="CPX-5141">
    <property type="entry name" value="Ubiquitous AP-1 Adaptor complex, sigma1a variant"/>
</dbReference>
<dbReference type="ComplexPortal" id="CPX-5142">
    <property type="entry name" value="Ubiquitous AP-1 Adaptor complex, sigma1b variant"/>
</dbReference>
<dbReference type="ComplexPortal" id="CPX-5143">
    <property type="entry name" value="Ubiquitous AP-1 Adaptor complex, sigma1c variant"/>
</dbReference>
<dbReference type="ComplexPortal" id="CPX-5144">
    <property type="entry name" value="Endothelial AP-1 Adaptor complex, sigma1a variant"/>
</dbReference>
<dbReference type="CORUM" id="P22892"/>
<dbReference type="FunCoup" id="P22892">
    <property type="interactions" value="5081"/>
</dbReference>
<dbReference type="IntAct" id="P22892">
    <property type="interactions" value="18"/>
</dbReference>
<dbReference type="MINT" id="P22892"/>
<dbReference type="STRING" id="10090.ENSMUSP00000090844"/>
<dbReference type="GlyGen" id="P22892">
    <property type="glycosylation" value="2 sites, 1 O-linked glycan (1 site)"/>
</dbReference>
<dbReference type="iPTMnet" id="P22892"/>
<dbReference type="PhosphoSitePlus" id="P22892"/>
<dbReference type="SwissPalm" id="P22892"/>
<dbReference type="jPOST" id="P22892"/>
<dbReference type="PaxDb" id="10090-ENSMUSP00000090844"/>
<dbReference type="PeptideAtlas" id="P22892"/>
<dbReference type="ProteomicsDB" id="296262"/>
<dbReference type="Pumba" id="P22892"/>
<dbReference type="Antibodypedia" id="3960">
    <property type="antibodies" value="254 antibodies from 34 providers"/>
</dbReference>
<dbReference type="DNASU" id="11765"/>
<dbReference type="Ensembl" id="ENSMUST00000034171.9">
    <property type="protein sequence ID" value="ENSMUSP00000034171.9"/>
    <property type="gene ID" value="ENSMUSG00000031731.17"/>
</dbReference>
<dbReference type="GeneID" id="11765"/>
<dbReference type="KEGG" id="mmu:11765"/>
<dbReference type="UCSC" id="uc012gkl.3">
    <property type="organism name" value="mouse"/>
</dbReference>
<dbReference type="AGR" id="MGI:101919"/>
<dbReference type="CTD" id="164"/>
<dbReference type="MGI" id="MGI:101919">
    <property type="gene designation" value="Ap1g1"/>
</dbReference>
<dbReference type="VEuPathDB" id="HostDB:ENSMUSG00000031731"/>
<dbReference type="eggNOG" id="KOG1062">
    <property type="taxonomic scope" value="Eukaryota"/>
</dbReference>
<dbReference type="GeneTree" id="ENSGT00950000182838"/>
<dbReference type="HOGENOM" id="CLU_003824_0_0_1"/>
<dbReference type="InParanoid" id="P22892"/>
<dbReference type="OrthoDB" id="28053at2759"/>
<dbReference type="PhylomeDB" id="P22892"/>
<dbReference type="Reactome" id="R-MMU-2132295">
    <property type="pathway name" value="MHC class II antigen presentation"/>
</dbReference>
<dbReference type="Reactome" id="R-MMU-432720">
    <property type="pathway name" value="Lysosome Vesicle Biogenesis"/>
</dbReference>
<dbReference type="Reactome" id="R-MMU-432722">
    <property type="pathway name" value="Golgi Associated Vesicle Biogenesis"/>
</dbReference>
<dbReference type="BioGRID-ORCS" id="11765">
    <property type="hits" value="7 hits in 61 CRISPR screens"/>
</dbReference>
<dbReference type="ChiTaRS" id="Ap1g1">
    <property type="organism name" value="mouse"/>
</dbReference>
<dbReference type="EvolutionaryTrace" id="P22892"/>
<dbReference type="PRO" id="PR:P22892"/>
<dbReference type="Proteomes" id="UP000000589">
    <property type="component" value="Chromosome 8"/>
</dbReference>
<dbReference type="RNAct" id="P22892">
    <property type="molecule type" value="protein"/>
</dbReference>
<dbReference type="Bgee" id="ENSMUSG00000031731">
    <property type="expression patterns" value="Expressed in undifferentiated genital tubercle and 254 other cell types or tissues"/>
</dbReference>
<dbReference type="ExpressionAtlas" id="P22892">
    <property type="expression patterns" value="baseline and differential"/>
</dbReference>
<dbReference type="GO" id="GO:0030121">
    <property type="term" value="C:AP-1 adaptor complex"/>
    <property type="evidence" value="ECO:0000303"/>
    <property type="project" value="ComplexPortal"/>
</dbReference>
<dbReference type="GO" id="GO:0005905">
    <property type="term" value="C:clathrin-coated pit"/>
    <property type="evidence" value="ECO:0007669"/>
    <property type="project" value="UniProtKB-SubCell"/>
</dbReference>
<dbReference type="GO" id="GO:0030136">
    <property type="term" value="C:clathrin-coated vesicle"/>
    <property type="evidence" value="ECO:0000266"/>
    <property type="project" value="MGI"/>
</dbReference>
<dbReference type="GO" id="GO:0005769">
    <property type="term" value="C:early endosome"/>
    <property type="evidence" value="ECO:0000303"/>
    <property type="project" value="ComplexPortal"/>
</dbReference>
<dbReference type="GO" id="GO:0005765">
    <property type="term" value="C:lysosomal membrane"/>
    <property type="evidence" value="ECO:0000303"/>
    <property type="project" value="ComplexPortal"/>
</dbReference>
<dbReference type="GO" id="GO:0048471">
    <property type="term" value="C:perinuclear region of cytoplasm"/>
    <property type="evidence" value="ECO:0000314"/>
    <property type="project" value="MGI"/>
</dbReference>
<dbReference type="GO" id="GO:0098793">
    <property type="term" value="C:presynapse"/>
    <property type="evidence" value="ECO:0000314"/>
    <property type="project" value="SynGO"/>
</dbReference>
<dbReference type="GO" id="GO:0005802">
    <property type="term" value="C:trans-Golgi network"/>
    <property type="evidence" value="ECO:0000314"/>
    <property type="project" value="MGI"/>
</dbReference>
<dbReference type="GO" id="GO:0032588">
    <property type="term" value="C:trans-Golgi network membrane"/>
    <property type="evidence" value="ECO:0000303"/>
    <property type="project" value="ComplexPortal"/>
</dbReference>
<dbReference type="GO" id="GO:0110010">
    <property type="term" value="P:basolateral protein secretion"/>
    <property type="evidence" value="ECO:0000303"/>
    <property type="project" value="ComplexPortal"/>
</dbReference>
<dbReference type="GO" id="GO:0006886">
    <property type="term" value="P:intracellular protein transport"/>
    <property type="evidence" value="ECO:0000304"/>
    <property type="project" value="MGI"/>
</dbReference>
<dbReference type="GO" id="GO:1903232">
    <property type="term" value="P:melanosome assembly"/>
    <property type="evidence" value="ECO:0000303"/>
    <property type="project" value="ComplexPortal"/>
</dbReference>
<dbReference type="GO" id="GO:0060155">
    <property type="term" value="P:platelet dense granule organization"/>
    <property type="evidence" value="ECO:0000303"/>
    <property type="project" value="ComplexPortal"/>
</dbReference>
<dbReference type="GO" id="GO:0016192">
    <property type="term" value="P:vesicle-mediated transport"/>
    <property type="evidence" value="ECO:0000304"/>
    <property type="project" value="MGI"/>
</dbReference>
<dbReference type="FunFam" id="1.25.10.10:FF:000030">
    <property type="entry name" value="AP-1 complex subunit gamma"/>
    <property type="match status" value="1"/>
</dbReference>
<dbReference type="FunFam" id="2.60.40.1230:FF:000002">
    <property type="entry name" value="AP-1 complex subunit gamma"/>
    <property type="match status" value="1"/>
</dbReference>
<dbReference type="Gene3D" id="2.60.40.1230">
    <property type="match status" value="1"/>
</dbReference>
<dbReference type="Gene3D" id="1.25.10.10">
    <property type="entry name" value="Leucine-rich Repeat Variant"/>
    <property type="match status" value="1"/>
</dbReference>
<dbReference type="InterPro" id="IPR050840">
    <property type="entry name" value="Adaptor_Complx_Large_Subunit"/>
</dbReference>
<dbReference type="InterPro" id="IPR017107">
    <property type="entry name" value="AP1_complex_gsu"/>
</dbReference>
<dbReference type="InterPro" id="IPR011989">
    <property type="entry name" value="ARM-like"/>
</dbReference>
<dbReference type="InterPro" id="IPR016024">
    <property type="entry name" value="ARM-type_fold"/>
</dbReference>
<dbReference type="InterPro" id="IPR002553">
    <property type="entry name" value="Clathrin/coatomer_adapt-like_N"/>
</dbReference>
<dbReference type="InterPro" id="IPR008152">
    <property type="entry name" value="Clathrin_a/b/g-adaptin_app_Ig"/>
</dbReference>
<dbReference type="InterPro" id="IPR013041">
    <property type="entry name" value="Clathrin_app_Ig-like_sf"/>
</dbReference>
<dbReference type="InterPro" id="IPR008153">
    <property type="entry name" value="GAE_dom"/>
</dbReference>
<dbReference type="PANTHER" id="PTHR22780">
    <property type="entry name" value="ADAPTIN, ALPHA/GAMMA/EPSILON"/>
    <property type="match status" value="1"/>
</dbReference>
<dbReference type="Pfam" id="PF01602">
    <property type="entry name" value="Adaptin_N"/>
    <property type="match status" value="1"/>
</dbReference>
<dbReference type="Pfam" id="PF02883">
    <property type="entry name" value="Alpha_adaptinC2"/>
    <property type="match status" value="1"/>
</dbReference>
<dbReference type="PIRSF" id="PIRSF037094">
    <property type="entry name" value="AP1_complex_gamma"/>
    <property type="match status" value="1"/>
</dbReference>
<dbReference type="SMART" id="SM00809">
    <property type="entry name" value="Alpha_adaptinC2"/>
    <property type="match status" value="1"/>
</dbReference>
<dbReference type="SUPFAM" id="SSF48371">
    <property type="entry name" value="ARM repeat"/>
    <property type="match status" value="1"/>
</dbReference>
<dbReference type="SUPFAM" id="SSF49348">
    <property type="entry name" value="Clathrin adaptor appendage domain"/>
    <property type="match status" value="1"/>
</dbReference>
<dbReference type="PROSITE" id="PS50180">
    <property type="entry name" value="GAE"/>
    <property type="match status" value="1"/>
</dbReference>
<name>AP1G1_MOUSE</name>
<accession>P22892</accession>
<sequence>MPAPIRLRELIRTIRTARTQAEEREMIQKECAAIRSSFREEDNTYRCRNVAKLLYMHMLGYPAHFGQLECLKLIASQKFTDKRIGYLGAMLLLDERQDVHLLMTNCIKNDLNHSTQFVQGLALCTLGCMGSSEMCRDLAGEVEKLLKTSNSYLRKKAALCAVHVIRKVPELMEMFLPATKNLLNEKNHGVLHTSVVLLTEMCERSPDMLAHFRKLVPQLVRILKNLIMSGYSPEHDVSGISDPFLQVRILRLLRILGRNDDDSSEAMNDILAQVATNTETSKNVGNAILYETVLTIMDIKSESGLRVLAINILGRFLLNNDKNIRYVALTSLLKTVQTDHNAVQRHRSTIVDCLKDLDVSIKRRAMELSFALVNGNNIRGMMKELLYFLDSCEPEFKADCASGIFLAAEKYAPSKRWHIDTIMRVLTTAGSYVRDDAVPNLIQLITNSVEMHAYTVQRLYKAILGDYSQQPLVQVAAWCIGEYGDLLVSGQCEEEEPIQVTEDEVLDILESVLISNMSTSVTRGYALTAIMKLSTRFTCTVNRIKKVVSIYGSSIDVELQQRAVEYNALFKKYDHMRSALLERMPVMEKVTTNGPSEIVQTNGETEPAPLETKPPPSGPQPTSQANDLLDLLGGNDITPVIPTAPTSKPASAGGELLDLLGDITLTGAPAAAPTPASVPQISQPPFLLDGLSSQPLFNDIAPGIPSITAYSKNGLKIEFTFERSNTNPSVTVITIQASNSTELDMTDFVFQAAVPKTFQLQLLSPSSSVVPAFNTGTITQVIKVLNPQKQQLRMRIKLTYNHKGSAMQDLAEVNNFPPQSWQ</sequence>
<feature type="initiator methionine" description="Removed" evidence="5">
    <location>
        <position position="1"/>
    </location>
</feature>
<feature type="chain" id="PRO_0000193759" description="AP-1 complex subunit gamma-1">
    <location>
        <begin position="2"/>
        <end position="822"/>
    </location>
</feature>
<feature type="domain" description="GAE" evidence="2">
    <location>
        <begin position="702"/>
        <end position="817"/>
    </location>
</feature>
<feature type="region of interest" description="Disordered" evidence="3">
    <location>
        <begin position="593"/>
        <end position="627"/>
    </location>
</feature>
<feature type="compositionally biased region" description="Polar residues" evidence="3">
    <location>
        <begin position="593"/>
        <end position="604"/>
    </location>
</feature>
<feature type="mutagenesis site" description="Strongly reduces interaction with EPS15 and SYNRG." evidence="4">
    <original>A</original>
    <variation>D</variation>
    <location>
        <position position="753"/>
    </location>
</feature>
<feature type="mutagenesis site" description="Strongly reduces interaction with EPS15 and SYNRG." evidence="4">
    <original>L</original>
    <variation>E</variation>
    <location>
        <position position="762"/>
    </location>
</feature>
<feature type="mutagenesis site" description="Reduces interaction with EPS15 and SYNRG." evidence="4">
    <original>P</original>
    <variation>N</variation>
    <location>
        <position position="765"/>
    </location>
</feature>
<feature type="helix" evidence="9">
    <location>
        <begin position="7"/>
        <end position="15"/>
    </location>
</feature>
<feature type="helix" evidence="9">
    <location>
        <begin position="20"/>
        <end position="39"/>
    </location>
</feature>
<feature type="strand" evidence="9">
    <location>
        <begin position="43"/>
        <end position="45"/>
    </location>
</feature>
<feature type="helix" evidence="9">
    <location>
        <begin position="46"/>
        <end position="59"/>
    </location>
</feature>
<feature type="helix" evidence="9">
    <location>
        <begin position="64"/>
        <end position="66"/>
    </location>
</feature>
<feature type="helix" evidence="9">
    <location>
        <begin position="67"/>
        <end position="74"/>
    </location>
</feature>
<feature type="strand" evidence="9">
    <location>
        <begin position="75"/>
        <end position="77"/>
    </location>
</feature>
<feature type="helix" evidence="9">
    <location>
        <begin position="79"/>
        <end position="92"/>
    </location>
</feature>
<feature type="strand" evidence="9">
    <location>
        <begin position="97"/>
        <end position="99"/>
    </location>
</feature>
<feature type="helix" evidence="9">
    <location>
        <begin position="100"/>
        <end position="103"/>
    </location>
</feature>
<feature type="helix" evidence="9">
    <location>
        <begin position="104"/>
        <end position="111"/>
    </location>
</feature>
<feature type="helix" evidence="9">
    <location>
        <begin position="116"/>
        <end position="129"/>
    </location>
</feature>
<feature type="helix" evidence="9">
    <location>
        <begin position="134"/>
        <end position="137"/>
    </location>
</feature>
<feature type="helix" evidence="9">
    <location>
        <begin position="139"/>
        <end position="145"/>
    </location>
</feature>
<feature type="helix" evidence="9">
    <location>
        <begin position="151"/>
        <end position="167"/>
    </location>
</feature>
<feature type="helix" evidence="9">
    <location>
        <begin position="173"/>
        <end position="175"/>
    </location>
</feature>
<feature type="helix" evidence="9">
    <location>
        <begin position="177"/>
        <end position="179"/>
    </location>
</feature>
<feature type="helix" evidence="9">
    <location>
        <begin position="188"/>
        <end position="204"/>
    </location>
</feature>
<feature type="turn" evidence="9">
    <location>
        <begin position="207"/>
        <end position="211"/>
    </location>
</feature>
<feature type="helix" evidence="9">
    <location>
        <begin position="212"/>
        <end position="215"/>
    </location>
</feature>
<feature type="helix" evidence="9">
    <location>
        <begin position="216"/>
        <end position="227"/>
    </location>
</feature>
<feature type="strand" evidence="9">
    <location>
        <begin position="233"/>
        <end position="237"/>
    </location>
</feature>
<feature type="helix" evidence="9">
    <location>
        <begin position="243"/>
        <end position="255"/>
    </location>
</feature>
<feature type="turn" evidence="8">
    <location>
        <begin position="256"/>
        <end position="259"/>
    </location>
</feature>
<feature type="helix" evidence="9">
    <location>
        <begin position="262"/>
        <end position="277"/>
    </location>
</feature>
<feature type="helix" evidence="9">
    <location>
        <begin position="283"/>
        <end position="298"/>
    </location>
</feature>
<feature type="helix" evidence="9">
    <location>
        <begin position="303"/>
        <end position="317"/>
    </location>
</feature>
<feature type="helix" evidence="9">
    <location>
        <begin position="322"/>
        <end position="334"/>
    </location>
</feature>
<feature type="strand" evidence="9">
    <location>
        <begin position="335"/>
        <end position="339"/>
    </location>
</feature>
<feature type="helix" evidence="9">
    <location>
        <begin position="340"/>
        <end position="343"/>
    </location>
</feature>
<feature type="helix" evidence="9">
    <location>
        <begin position="344"/>
        <end position="346"/>
    </location>
</feature>
<feature type="helix" evidence="9">
    <location>
        <begin position="347"/>
        <end position="354"/>
    </location>
</feature>
<feature type="helix" evidence="9">
    <location>
        <begin position="359"/>
        <end position="371"/>
    </location>
</feature>
<feature type="strand" evidence="9">
    <location>
        <begin position="375"/>
        <end position="377"/>
    </location>
</feature>
<feature type="helix" evidence="9">
    <location>
        <begin position="378"/>
        <end position="390"/>
    </location>
</feature>
<feature type="helix" evidence="9">
    <location>
        <begin position="397"/>
        <end position="410"/>
    </location>
</feature>
<feature type="helix" evidence="9">
    <location>
        <begin position="415"/>
        <end position="428"/>
    </location>
</feature>
<feature type="helix" evidence="9">
    <location>
        <begin position="430"/>
        <end position="432"/>
    </location>
</feature>
<feature type="helix" evidence="9">
    <location>
        <begin position="435"/>
        <end position="437"/>
    </location>
</feature>
<feature type="helix" evidence="9">
    <location>
        <begin position="438"/>
        <end position="447"/>
    </location>
</feature>
<feature type="turn" evidence="8">
    <location>
        <begin position="449"/>
        <end position="452"/>
    </location>
</feature>
<feature type="helix" evidence="9">
    <location>
        <begin position="453"/>
        <end position="465"/>
    </location>
</feature>
<feature type="helix" evidence="9">
    <location>
        <begin position="470"/>
        <end position="487"/>
    </location>
</feature>
<feature type="helix" evidence="9">
    <location>
        <begin position="504"/>
        <end position="514"/>
    </location>
</feature>
<feature type="strand" evidence="9">
    <location>
        <begin position="516"/>
        <end position="518"/>
    </location>
</feature>
<feature type="helix" evidence="9">
    <location>
        <begin position="522"/>
        <end position="536"/>
    </location>
</feature>
<feature type="helix" evidence="9">
    <location>
        <begin position="544"/>
        <end position="549"/>
    </location>
</feature>
<feature type="turn" evidence="9">
    <location>
        <begin position="550"/>
        <end position="553"/>
    </location>
</feature>
<feature type="helix" evidence="9">
    <location>
        <begin position="557"/>
        <end position="572"/>
    </location>
</feature>
<feature type="helix" evidence="9">
    <location>
        <begin position="577"/>
        <end position="580"/>
    </location>
</feature>
<feature type="strand" evidence="7">
    <location>
        <begin position="707"/>
        <end position="712"/>
    </location>
</feature>
<feature type="strand" evidence="7">
    <location>
        <begin position="715"/>
        <end position="722"/>
    </location>
</feature>
<feature type="strand" evidence="7">
    <location>
        <begin position="730"/>
        <end position="739"/>
    </location>
</feature>
<feature type="strand" evidence="7">
    <location>
        <begin position="741"/>
        <end position="743"/>
    </location>
</feature>
<feature type="strand" evidence="7">
    <location>
        <begin position="745"/>
        <end position="753"/>
    </location>
</feature>
<feature type="strand" evidence="7">
    <location>
        <begin position="758"/>
        <end position="762"/>
    </location>
</feature>
<feature type="helix" evidence="7">
    <location>
        <begin position="772"/>
        <end position="774"/>
    </location>
</feature>
<feature type="strand" evidence="7">
    <location>
        <begin position="778"/>
        <end position="785"/>
    </location>
</feature>
<feature type="strand" evidence="7">
    <location>
        <begin position="794"/>
        <end position="802"/>
    </location>
</feature>
<feature type="strand" evidence="7">
    <location>
        <begin position="805"/>
        <end position="813"/>
    </location>
</feature>
<feature type="helix" evidence="7">
    <location>
        <begin position="818"/>
        <end position="820"/>
    </location>
</feature>
<proteinExistence type="evidence at protein level"/>